<gene>
    <name evidence="1" type="primary">rpmJ</name>
    <name type="ordered locus">BMASAVP1_A3147</name>
</gene>
<organism>
    <name type="scientific">Burkholderia mallei (strain SAVP1)</name>
    <dbReference type="NCBI Taxonomy" id="320388"/>
    <lineage>
        <taxon>Bacteria</taxon>
        <taxon>Pseudomonadati</taxon>
        <taxon>Pseudomonadota</taxon>
        <taxon>Betaproteobacteria</taxon>
        <taxon>Burkholderiales</taxon>
        <taxon>Burkholderiaceae</taxon>
        <taxon>Burkholderia</taxon>
        <taxon>pseudomallei group</taxon>
    </lineage>
</organism>
<feature type="chain" id="PRO_1000003398" description="Large ribosomal subunit protein bL36">
    <location>
        <begin position="1"/>
        <end position="38"/>
    </location>
</feature>
<accession>A1V881</accession>
<keyword id="KW-0687">Ribonucleoprotein</keyword>
<keyword id="KW-0689">Ribosomal protein</keyword>
<dbReference type="EMBL" id="CP000526">
    <property type="protein sequence ID" value="ABM49653.1"/>
    <property type="molecule type" value="Genomic_DNA"/>
</dbReference>
<dbReference type="RefSeq" id="WP_004199844.1">
    <property type="nucleotide sequence ID" value="NC_008785.1"/>
</dbReference>
<dbReference type="SMR" id="A1V881"/>
<dbReference type="GeneID" id="98107138"/>
<dbReference type="KEGG" id="bmv:BMASAVP1_A3147"/>
<dbReference type="HOGENOM" id="CLU_135723_6_2_4"/>
<dbReference type="GO" id="GO:0005737">
    <property type="term" value="C:cytoplasm"/>
    <property type="evidence" value="ECO:0007669"/>
    <property type="project" value="UniProtKB-ARBA"/>
</dbReference>
<dbReference type="GO" id="GO:1990904">
    <property type="term" value="C:ribonucleoprotein complex"/>
    <property type="evidence" value="ECO:0007669"/>
    <property type="project" value="UniProtKB-KW"/>
</dbReference>
<dbReference type="GO" id="GO:0005840">
    <property type="term" value="C:ribosome"/>
    <property type="evidence" value="ECO:0007669"/>
    <property type="project" value="UniProtKB-KW"/>
</dbReference>
<dbReference type="GO" id="GO:0003735">
    <property type="term" value="F:structural constituent of ribosome"/>
    <property type="evidence" value="ECO:0007669"/>
    <property type="project" value="InterPro"/>
</dbReference>
<dbReference type="GO" id="GO:0006412">
    <property type="term" value="P:translation"/>
    <property type="evidence" value="ECO:0007669"/>
    <property type="project" value="UniProtKB-UniRule"/>
</dbReference>
<dbReference type="HAMAP" id="MF_00251">
    <property type="entry name" value="Ribosomal_bL36"/>
    <property type="match status" value="1"/>
</dbReference>
<dbReference type="InterPro" id="IPR000473">
    <property type="entry name" value="Ribosomal_bL36"/>
</dbReference>
<dbReference type="InterPro" id="IPR035977">
    <property type="entry name" value="Ribosomal_bL36_sp"/>
</dbReference>
<dbReference type="NCBIfam" id="TIGR01022">
    <property type="entry name" value="rpmJ_bact"/>
    <property type="match status" value="1"/>
</dbReference>
<dbReference type="PANTHER" id="PTHR42888">
    <property type="entry name" value="50S RIBOSOMAL PROTEIN L36, CHLOROPLASTIC"/>
    <property type="match status" value="1"/>
</dbReference>
<dbReference type="PANTHER" id="PTHR42888:SF1">
    <property type="entry name" value="LARGE RIBOSOMAL SUBUNIT PROTEIN BL36C"/>
    <property type="match status" value="1"/>
</dbReference>
<dbReference type="Pfam" id="PF00444">
    <property type="entry name" value="Ribosomal_L36"/>
    <property type="match status" value="1"/>
</dbReference>
<dbReference type="SUPFAM" id="SSF57840">
    <property type="entry name" value="Ribosomal protein L36"/>
    <property type="match status" value="1"/>
</dbReference>
<dbReference type="PROSITE" id="PS00828">
    <property type="entry name" value="RIBOSOMAL_L36"/>
    <property type="match status" value="1"/>
</dbReference>
<proteinExistence type="inferred from homology"/>
<protein>
    <recommendedName>
        <fullName evidence="1">Large ribosomal subunit protein bL36</fullName>
    </recommendedName>
    <alternativeName>
        <fullName evidence="2">50S ribosomal protein L36</fullName>
    </alternativeName>
</protein>
<sequence length="38" mass="4410">MKVMASVKRICRNCKIIKRKGVVRVICSSDPRHKQRQG</sequence>
<reference key="1">
    <citation type="journal article" date="2010" name="Genome Biol. Evol.">
        <title>Continuing evolution of Burkholderia mallei through genome reduction and large-scale rearrangements.</title>
        <authorList>
            <person name="Losada L."/>
            <person name="Ronning C.M."/>
            <person name="DeShazer D."/>
            <person name="Woods D."/>
            <person name="Fedorova N."/>
            <person name="Kim H.S."/>
            <person name="Shabalina S.A."/>
            <person name="Pearson T.R."/>
            <person name="Brinkac L."/>
            <person name="Tan P."/>
            <person name="Nandi T."/>
            <person name="Crabtree J."/>
            <person name="Badger J."/>
            <person name="Beckstrom-Sternberg S."/>
            <person name="Saqib M."/>
            <person name="Schutzer S.E."/>
            <person name="Keim P."/>
            <person name="Nierman W.C."/>
        </authorList>
    </citation>
    <scope>NUCLEOTIDE SEQUENCE [LARGE SCALE GENOMIC DNA]</scope>
    <source>
        <strain>SAVP1</strain>
    </source>
</reference>
<comment type="similarity">
    <text evidence="1">Belongs to the bacterial ribosomal protein bL36 family.</text>
</comment>
<evidence type="ECO:0000255" key="1">
    <source>
        <dbReference type="HAMAP-Rule" id="MF_00251"/>
    </source>
</evidence>
<evidence type="ECO:0000305" key="2"/>
<name>RL36_BURMS</name>